<feature type="initiator methionine" description="Removed" evidence="3">
    <location>
        <position position="1"/>
    </location>
</feature>
<feature type="chain" id="PRO_0000316003" description="Eukaryotic translation initiation factor 2 subunit 3">
    <location>
        <begin position="2"/>
        <end position="472"/>
    </location>
</feature>
<feature type="domain" description="tr-type G" evidence="6">
    <location>
        <begin position="39"/>
        <end position="248"/>
    </location>
</feature>
<feature type="region of interest" description="G1" evidence="6">
    <location>
        <begin position="48"/>
        <end position="55"/>
    </location>
</feature>
<feature type="region of interest" description="G2" evidence="6">
    <location>
        <begin position="76"/>
        <end position="80"/>
    </location>
</feature>
<feature type="region of interest" description="G3" evidence="6">
    <location>
        <begin position="134"/>
        <end position="137"/>
    </location>
</feature>
<feature type="region of interest" description="G4" evidence="6">
    <location>
        <begin position="190"/>
        <end position="193"/>
    </location>
</feature>
<feature type="region of interest" description="G5" evidence="6">
    <location>
        <begin position="225"/>
        <end position="227"/>
    </location>
</feature>
<feature type="region of interest" description="Interacts with CDC123" evidence="3">
    <location>
        <begin position="457"/>
        <end position="469"/>
    </location>
</feature>
<feature type="binding site" evidence="2">
    <location>
        <begin position="51"/>
        <end position="56"/>
    </location>
    <ligand>
        <name>GTP</name>
        <dbReference type="ChEBI" id="CHEBI:37565"/>
    </ligand>
</feature>
<feature type="binding site" evidence="2">
    <location>
        <begin position="190"/>
        <end position="193"/>
    </location>
    <ligand>
        <name>GTP</name>
        <dbReference type="ChEBI" id="CHEBI:37565"/>
    </ligand>
</feature>
<feature type="binding site" evidence="2">
    <location>
        <begin position="225"/>
        <end position="227"/>
    </location>
    <ligand>
        <name>GTP</name>
        <dbReference type="ChEBI" id="CHEBI:37565"/>
    </ligand>
</feature>
<feature type="modified residue" description="N-acetylalanine" evidence="3">
    <location>
        <position position="2"/>
    </location>
</feature>
<feature type="modified residue" description="Phosphoserine" evidence="5">
    <location>
        <position position="16"/>
    </location>
</feature>
<feature type="sequence conflict" description="In Ref. 2; ABQ12931." evidence="7" ref="2">
    <original>Q</original>
    <variation>H</variation>
    <location>
        <position position="203"/>
    </location>
</feature>
<gene>
    <name type="primary">EIF2S3</name>
</gene>
<protein>
    <recommendedName>
        <fullName>Eukaryotic translation initiation factor 2 subunit 3</fullName>
        <ecNumber evidence="2">3.6.5.3</ecNumber>
    </recommendedName>
    <alternativeName>
        <fullName>Eukaryotic translation initiation factor 2 subunit gamma</fullName>
        <shortName>eIF2-gamma</shortName>
    </alternativeName>
</protein>
<accession>Q2KHU8</accession>
<accession>A5D972</accession>
<keyword id="KW-0007">Acetylation</keyword>
<keyword id="KW-0963">Cytoplasm</keyword>
<keyword id="KW-0342">GTP-binding</keyword>
<keyword id="KW-0378">Hydrolase</keyword>
<keyword id="KW-0396">Initiation factor</keyword>
<keyword id="KW-0547">Nucleotide-binding</keyword>
<keyword id="KW-0597">Phosphoprotein</keyword>
<keyword id="KW-0648">Protein biosynthesis</keyword>
<keyword id="KW-1185">Reference proteome</keyword>
<organism>
    <name type="scientific">Bos taurus</name>
    <name type="common">Bovine</name>
    <dbReference type="NCBI Taxonomy" id="9913"/>
    <lineage>
        <taxon>Eukaryota</taxon>
        <taxon>Metazoa</taxon>
        <taxon>Chordata</taxon>
        <taxon>Craniata</taxon>
        <taxon>Vertebrata</taxon>
        <taxon>Euteleostomi</taxon>
        <taxon>Mammalia</taxon>
        <taxon>Eutheria</taxon>
        <taxon>Laurasiatheria</taxon>
        <taxon>Artiodactyla</taxon>
        <taxon>Ruminantia</taxon>
        <taxon>Pecora</taxon>
        <taxon>Bovidae</taxon>
        <taxon>Bovinae</taxon>
        <taxon>Bos</taxon>
    </lineage>
</organism>
<proteinExistence type="evidence at transcript level"/>
<sequence length="472" mass="51065">MAGGEAGVTLGQPHLSRQDLATLDVSKLTPLSHEVISRQATINIGTIGHVAHGKSTVVKAISGVHTVRFKNELERNITIKLGYANAKIYKLDDPSCPRPECYRSCGSSTPDEFPTDIPGTKGNFKLVRHVSFVDCPGHDILMATMLNGAAVMDAALLLIAGNESCPQPQTSEHLAAIEIMKLKHILILQNKIDLVKESQAKEQYEQILAFVQGTVAEGAPIIPISAQLKYNIEVVCEYIVKKIPVPPRDFTSEPRLIVIRSFDVNKPGCEVDDLKGGVAGGSILKGVLKVGQEIEVRPGIVSKDSEGKLMCKPIFSKIVSLFAEHNDLQYAAPGGLIGVGTKIDPTLCRADRMVGQVLGAVGALPEIFTELEISYFLLRRLLGVRTEGDKKAAKVQKLSKNEVLMVNIGSLSTGGRVSAVKADLGKIVLTNPVCTEVGEKIALSRRVEKHWRLIGWGQIRRGVTIKPTVDDD</sequence>
<evidence type="ECO:0000250" key="1">
    <source>
        <dbReference type="UniProtKB" id="P05198"/>
    </source>
</evidence>
<evidence type="ECO:0000250" key="2">
    <source>
        <dbReference type="UniProtKB" id="P32481"/>
    </source>
</evidence>
<evidence type="ECO:0000250" key="3">
    <source>
        <dbReference type="UniProtKB" id="P41091"/>
    </source>
</evidence>
<evidence type="ECO:0000250" key="4">
    <source>
        <dbReference type="UniProtKB" id="Q09130"/>
    </source>
</evidence>
<evidence type="ECO:0000250" key="5">
    <source>
        <dbReference type="UniProtKB" id="Q9Z0N1"/>
    </source>
</evidence>
<evidence type="ECO:0000255" key="6">
    <source>
        <dbReference type="PROSITE-ProRule" id="PRU01059"/>
    </source>
</evidence>
<evidence type="ECO:0000305" key="7"/>
<dbReference type="EC" id="3.6.5.3" evidence="2"/>
<dbReference type="EMBL" id="BC112875">
    <property type="protein sequence ID" value="AAI12876.1"/>
    <property type="molecule type" value="mRNA"/>
</dbReference>
<dbReference type="EMBL" id="BT030491">
    <property type="protein sequence ID" value="ABQ12931.1"/>
    <property type="status" value="ALT_INIT"/>
    <property type="molecule type" value="mRNA"/>
</dbReference>
<dbReference type="RefSeq" id="NP_001039582.1">
    <property type="nucleotide sequence ID" value="NM_001046117.2"/>
</dbReference>
<dbReference type="SMR" id="Q2KHU8"/>
<dbReference type="FunCoup" id="Q2KHU8">
    <property type="interactions" value="2674"/>
</dbReference>
<dbReference type="STRING" id="9913.ENSBTAP00000019064"/>
<dbReference type="PaxDb" id="9913-ENSBTAP00000019064"/>
<dbReference type="PeptideAtlas" id="Q2KHU8"/>
<dbReference type="Ensembl" id="ENSBTAT00000019064.7">
    <property type="protein sequence ID" value="ENSBTAP00000019064.5"/>
    <property type="gene ID" value="ENSBTAG00000014337.7"/>
</dbReference>
<dbReference type="GeneID" id="512350"/>
<dbReference type="KEGG" id="bta:512350"/>
<dbReference type="CTD" id="1968"/>
<dbReference type="VEuPathDB" id="HostDB:ENSBTAG00000014337"/>
<dbReference type="eggNOG" id="KOG0466">
    <property type="taxonomic scope" value="Eukaryota"/>
</dbReference>
<dbReference type="GeneTree" id="ENSGT00550000074801"/>
<dbReference type="HOGENOM" id="CLU_027154_0_1_1"/>
<dbReference type="InParanoid" id="Q2KHU8"/>
<dbReference type="OMA" id="NIGMVGH"/>
<dbReference type="OrthoDB" id="1045173at2759"/>
<dbReference type="TreeFam" id="TF101513"/>
<dbReference type="Reactome" id="R-BTA-156827">
    <property type="pathway name" value="L13a-mediated translational silencing of Ceruloplasmin expression"/>
</dbReference>
<dbReference type="Reactome" id="R-BTA-381042">
    <property type="pathway name" value="PERK regulates gene expression"/>
</dbReference>
<dbReference type="Reactome" id="R-BTA-382556">
    <property type="pathway name" value="ABC-family proteins mediated transport"/>
</dbReference>
<dbReference type="Reactome" id="R-BTA-72649">
    <property type="pathway name" value="Translation initiation complex formation"/>
</dbReference>
<dbReference type="Reactome" id="R-BTA-72695">
    <property type="pathway name" value="Formation of the ternary complex, and subsequently, the 43S complex"/>
</dbReference>
<dbReference type="Reactome" id="R-BTA-72702">
    <property type="pathway name" value="Ribosomal scanning and start codon recognition"/>
</dbReference>
<dbReference type="Reactome" id="R-BTA-72731">
    <property type="pathway name" value="Recycling of eIF2:GDP"/>
</dbReference>
<dbReference type="Reactome" id="R-BTA-9840373">
    <property type="pathway name" value="Cellular response to mitochondrial stress"/>
</dbReference>
<dbReference type="Proteomes" id="UP000009136">
    <property type="component" value="Chromosome X"/>
</dbReference>
<dbReference type="Bgee" id="ENSBTAG00000014337">
    <property type="expression patterns" value="Expressed in milk and 107 other cell types or tissues"/>
</dbReference>
<dbReference type="GO" id="GO:0005829">
    <property type="term" value="C:cytosol"/>
    <property type="evidence" value="ECO:0007669"/>
    <property type="project" value="UniProtKB-SubCell"/>
</dbReference>
<dbReference type="GO" id="GO:0005850">
    <property type="term" value="C:eukaryotic translation initiation factor 2 complex"/>
    <property type="evidence" value="ECO:0000250"/>
    <property type="project" value="UniProtKB"/>
</dbReference>
<dbReference type="GO" id="GO:0005525">
    <property type="term" value="F:GTP binding"/>
    <property type="evidence" value="ECO:0007669"/>
    <property type="project" value="UniProtKB-KW"/>
</dbReference>
<dbReference type="GO" id="GO:0003924">
    <property type="term" value="F:GTPase activity"/>
    <property type="evidence" value="ECO:0007669"/>
    <property type="project" value="InterPro"/>
</dbReference>
<dbReference type="GO" id="GO:1990856">
    <property type="term" value="F:methionyl-initiator methionine tRNA binding"/>
    <property type="evidence" value="ECO:0000250"/>
    <property type="project" value="UniProtKB"/>
</dbReference>
<dbReference type="GO" id="GO:0008135">
    <property type="term" value="F:translation factor activity, RNA binding"/>
    <property type="evidence" value="ECO:0000250"/>
    <property type="project" value="UniProtKB"/>
</dbReference>
<dbReference type="GO" id="GO:0003743">
    <property type="term" value="F:translation initiation factor activity"/>
    <property type="evidence" value="ECO:0000250"/>
    <property type="project" value="UniProtKB"/>
</dbReference>
<dbReference type="GO" id="GO:0002183">
    <property type="term" value="P:cytoplasmic translational initiation"/>
    <property type="evidence" value="ECO:0000250"/>
    <property type="project" value="UniProtKB"/>
</dbReference>
<dbReference type="GO" id="GO:0001731">
    <property type="term" value="P:formation of translation preinitiation complex"/>
    <property type="evidence" value="ECO:0000318"/>
    <property type="project" value="GO_Central"/>
</dbReference>
<dbReference type="GO" id="GO:0006413">
    <property type="term" value="P:translational initiation"/>
    <property type="evidence" value="ECO:0000250"/>
    <property type="project" value="UniProtKB"/>
</dbReference>
<dbReference type="CDD" id="cd01888">
    <property type="entry name" value="eIF2_gamma"/>
    <property type="match status" value="1"/>
</dbReference>
<dbReference type="CDD" id="cd03688">
    <property type="entry name" value="eIF2_gamma_II"/>
    <property type="match status" value="1"/>
</dbReference>
<dbReference type="CDD" id="cd15490">
    <property type="entry name" value="eIF2_gamma_III"/>
    <property type="match status" value="1"/>
</dbReference>
<dbReference type="FunFam" id="2.40.30.10:FF:000009">
    <property type="entry name" value="Eukaryotic translation initiation factor 2 subunit gamma"/>
    <property type="match status" value="1"/>
</dbReference>
<dbReference type="FunFam" id="2.40.30.10:FF:000011">
    <property type="entry name" value="Eukaryotic translation initiation factor 2 subunit gamma"/>
    <property type="match status" value="1"/>
</dbReference>
<dbReference type="FunFam" id="3.40.50.300:FF:000065">
    <property type="entry name" value="Eukaryotic translation initiation factor 2 subunit gamma"/>
    <property type="match status" value="1"/>
</dbReference>
<dbReference type="Gene3D" id="3.40.50.300">
    <property type="entry name" value="P-loop containing nucleotide triphosphate hydrolases"/>
    <property type="match status" value="1"/>
</dbReference>
<dbReference type="Gene3D" id="2.40.30.10">
    <property type="entry name" value="Translation factors"/>
    <property type="match status" value="2"/>
</dbReference>
<dbReference type="InterPro" id="IPR004161">
    <property type="entry name" value="EFTu-like_2"/>
</dbReference>
<dbReference type="InterPro" id="IPR050543">
    <property type="entry name" value="eIF2G"/>
</dbReference>
<dbReference type="InterPro" id="IPR015256">
    <property type="entry name" value="eIF2g_C"/>
</dbReference>
<dbReference type="InterPro" id="IPR044127">
    <property type="entry name" value="eIF2g_dom_2"/>
</dbReference>
<dbReference type="InterPro" id="IPR044128">
    <property type="entry name" value="eIF2g_GTP-bd"/>
</dbReference>
<dbReference type="InterPro" id="IPR027417">
    <property type="entry name" value="P-loop_NTPase"/>
</dbReference>
<dbReference type="InterPro" id="IPR000795">
    <property type="entry name" value="T_Tr_GTP-bd_dom"/>
</dbReference>
<dbReference type="InterPro" id="IPR009000">
    <property type="entry name" value="Transl_B-barrel_sf"/>
</dbReference>
<dbReference type="InterPro" id="IPR009001">
    <property type="entry name" value="Transl_elong_EF1A/Init_IF2_C"/>
</dbReference>
<dbReference type="NCBIfam" id="NF003077">
    <property type="entry name" value="PRK04000.1"/>
    <property type="match status" value="1"/>
</dbReference>
<dbReference type="PANTHER" id="PTHR42854">
    <property type="entry name" value="EUKARYOTIC TRANSLATION INITIATION FACTOR 2 SUBUNIT 3 FAMILY MEMBER"/>
    <property type="match status" value="1"/>
</dbReference>
<dbReference type="PANTHER" id="PTHR42854:SF3">
    <property type="entry name" value="EUKARYOTIC TRANSLATION INITIATION FACTOR 2 SUBUNIT 3-RELATED"/>
    <property type="match status" value="1"/>
</dbReference>
<dbReference type="Pfam" id="PF09173">
    <property type="entry name" value="eIF2_C"/>
    <property type="match status" value="1"/>
</dbReference>
<dbReference type="Pfam" id="PF00009">
    <property type="entry name" value="GTP_EFTU"/>
    <property type="match status" value="1"/>
</dbReference>
<dbReference type="Pfam" id="PF03144">
    <property type="entry name" value="GTP_EFTU_D2"/>
    <property type="match status" value="1"/>
</dbReference>
<dbReference type="PRINTS" id="PR00315">
    <property type="entry name" value="ELONGATNFCT"/>
</dbReference>
<dbReference type="SUPFAM" id="SSF50465">
    <property type="entry name" value="EF-Tu/eEF-1alpha/eIF2-gamma C-terminal domain"/>
    <property type="match status" value="1"/>
</dbReference>
<dbReference type="SUPFAM" id="SSF52540">
    <property type="entry name" value="P-loop containing nucleoside triphosphate hydrolases"/>
    <property type="match status" value="1"/>
</dbReference>
<dbReference type="SUPFAM" id="SSF50447">
    <property type="entry name" value="Translation proteins"/>
    <property type="match status" value="1"/>
</dbReference>
<dbReference type="PROSITE" id="PS51722">
    <property type="entry name" value="G_TR_2"/>
    <property type="match status" value="1"/>
</dbReference>
<reference key="1">
    <citation type="submission" date="2006-01" db="EMBL/GenBank/DDBJ databases">
        <authorList>
            <consortium name="NIH - Mammalian Gene Collection (MGC) project"/>
        </authorList>
    </citation>
    <scope>NUCLEOTIDE SEQUENCE [LARGE SCALE MRNA]</scope>
    <source>
        <strain>Hereford</strain>
        <tissue>Heart ventricle</tissue>
    </source>
</reference>
<reference key="2">
    <citation type="journal article" date="2005" name="BMC Genomics">
        <title>Characterization of 954 bovine full-CDS cDNA sequences.</title>
        <authorList>
            <person name="Harhay G.P."/>
            <person name="Sonstegard T.S."/>
            <person name="Keele J.W."/>
            <person name="Heaton M.P."/>
            <person name="Clawson M.L."/>
            <person name="Snelling W.M."/>
            <person name="Wiedmann R.T."/>
            <person name="Van Tassell C.P."/>
            <person name="Smith T.P.L."/>
        </authorList>
    </citation>
    <scope>NUCLEOTIDE SEQUENCE [LARGE SCALE MRNA] OF 2-472</scope>
</reference>
<comment type="function">
    <text evidence="1">Member of the eIF2 complex that functions in the early steps of protein synthesis by forming a ternary complex with GTP and initiator tRNA. This complex binds to a 40S ribosomal subunit, followed by mRNA binding to form the 43S pre-initiation complex (43S PIC). Junction of the 60S ribosomal subunit to form the 80S initiation complex is preceded by hydrolysis of the GTP bound to eIF2 and release of an eIF2-GDP binary complex. In order for eIF2 to recycle and catalyze another round of initiation, the GDP bound to eIF2 must exchange with GTP by way of a reaction catalyzed by eIF-2B (By similarity).</text>
</comment>
<comment type="catalytic activity">
    <reaction evidence="2">
        <text>GTP + H2O = GDP + phosphate + H(+)</text>
        <dbReference type="Rhea" id="RHEA:19669"/>
        <dbReference type="ChEBI" id="CHEBI:15377"/>
        <dbReference type="ChEBI" id="CHEBI:15378"/>
        <dbReference type="ChEBI" id="CHEBI:37565"/>
        <dbReference type="ChEBI" id="CHEBI:43474"/>
        <dbReference type="ChEBI" id="CHEBI:58189"/>
        <dbReference type="EC" id="3.6.5.3"/>
    </reaction>
</comment>
<comment type="subunit">
    <text evidence="3">Eukaryotic translation initiation factor 2 eIF2 is a heterotrimeric complex composed of an alpha (EIF2S1), a beta (EIF2S2) and a gamma (EIF2S3) chain. eIF2 is member of the 43S pre-initiation complex (43S PIC). Interacts (via C-terminus) with CDC123; the interaction is direct.</text>
</comment>
<comment type="subcellular location">
    <subcellularLocation>
        <location evidence="4">Cytoplasm</location>
        <location evidence="4">Cytosol</location>
    </subcellularLocation>
</comment>
<comment type="similarity">
    <text evidence="6">Belongs to the TRAFAC class translation factor GTPase superfamily. Classic translation factor GTPase family. EIF2G subfamily.</text>
</comment>
<comment type="sequence caution" evidence="7">
    <conflict type="erroneous initiation">
        <sequence resource="EMBL-CDS" id="ABQ12931"/>
    </conflict>
    <text>Extended N-terminus.</text>
</comment>
<name>IF2G_BOVIN</name>